<reference key="1">
    <citation type="journal article" date="2002" name="J. Gen. Virol.">
        <title>Genetic analysis of an adenovirus isolated from corn snake (Elaphe guttata) implies common origin with the members of the proposed new genus Atadenovirus.</title>
        <authorList>
            <person name="Farkas S.L."/>
            <person name="Benko M."/>
            <person name="Elo P.T."/>
            <person name="Ursu K."/>
            <person name="Dan A."/>
            <person name="Ahne W."/>
            <person name="Harrach B."/>
        </authorList>
    </citation>
    <scope>NUCLEOTIDE SEQUENCE [GENOMIC DNA]</scope>
</reference>
<organism>
    <name type="scientific">Snake adenovirus serotype 1</name>
    <name type="common">SnAdV-1</name>
    <dbReference type="NCBI Taxonomy" id="189830"/>
    <lineage>
        <taxon>Viruses</taxon>
        <taxon>Varidnaviria</taxon>
        <taxon>Bamfordvirae</taxon>
        <taxon>Preplasmiviricota</taxon>
        <taxon>Tectiliviricetes</taxon>
        <taxon>Rowavirales</taxon>
        <taxon>Adenoviridae</taxon>
        <taxon>Atadenovirus</taxon>
        <taxon>Snake atadenovirus A</taxon>
    </lineage>
</organism>
<accession>A9CB83</accession>
<keyword id="KW-1185">Reference proteome</keyword>
<organismHost>
    <name type="scientific">Pantherophis guttatus</name>
    <name type="common">Corn snake</name>
    <name type="synonym">Elaphe guttata</name>
    <dbReference type="NCBI Taxonomy" id="94885"/>
</organismHost>
<protein>
    <recommendedName>
        <fullName>Protein LH1</fullName>
    </recommendedName>
</protein>
<proteinExistence type="predicted"/>
<sequence>MKGADRHFYIVPVGGETTVDFFEWRLVKGYLFSDFSVLYIPALAKESSIVTSAALALTRRDCKADLAQFMDGARNLTVTNGESPNSDWMFEYLSKLCLNVSRLTGSGRGETVYWEEER</sequence>
<dbReference type="EMBL" id="DQ106414">
    <property type="protein sequence ID" value="ABA47233.1"/>
    <property type="molecule type" value="Genomic_DNA"/>
</dbReference>
<dbReference type="RefSeq" id="YP_001552243.1">
    <property type="nucleotide sequence ID" value="NC_009989.1"/>
</dbReference>
<dbReference type="GeneID" id="10973885"/>
<dbReference type="KEGG" id="vg:10973885"/>
<dbReference type="OrthoDB" id="36122at10239"/>
<dbReference type="Proteomes" id="UP000136605">
    <property type="component" value="Genome"/>
</dbReference>
<name>LH1_ADES1</name>
<feature type="chain" id="PRO_0000425911" description="Protein LH1">
    <location>
        <begin position="1"/>
        <end position="118"/>
    </location>
</feature>